<comment type="function">
    <text evidence="2">GTP hydrolase that promotes the GTP-dependent binding of aminoacyl-tRNA to the A-site of ribosomes during protein biosynthesis.</text>
</comment>
<comment type="catalytic activity">
    <reaction evidence="2">
        <text>GTP + H2O = GDP + phosphate + H(+)</text>
        <dbReference type="Rhea" id="RHEA:19669"/>
        <dbReference type="ChEBI" id="CHEBI:15377"/>
        <dbReference type="ChEBI" id="CHEBI:15378"/>
        <dbReference type="ChEBI" id="CHEBI:37565"/>
        <dbReference type="ChEBI" id="CHEBI:43474"/>
        <dbReference type="ChEBI" id="CHEBI:58189"/>
        <dbReference type="EC" id="3.6.5.3"/>
    </reaction>
    <physiologicalReaction direction="left-to-right" evidence="2">
        <dbReference type="Rhea" id="RHEA:19670"/>
    </physiologicalReaction>
</comment>
<comment type="subunit">
    <text evidence="2">Monomer.</text>
</comment>
<comment type="subcellular location">
    <subcellularLocation>
        <location evidence="2">Cytoplasm</location>
    </subcellularLocation>
</comment>
<comment type="similarity">
    <text evidence="2">Belongs to the TRAFAC class translation factor GTPase superfamily. Classic translation factor GTPase family. EF-Tu/EF-1A subfamily.</text>
</comment>
<name>EFTU_GRABC</name>
<organism>
    <name type="scientific">Granulibacter bethesdensis (strain ATCC BAA-1260 / CGDNIH1)</name>
    <dbReference type="NCBI Taxonomy" id="391165"/>
    <lineage>
        <taxon>Bacteria</taxon>
        <taxon>Pseudomonadati</taxon>
        <taxon>Pseudomonadota</taxon>
        <taxon>Alphaproteobacteria</taxon>
        <taxon>Acetobacterales</taxon>
        <taxon>Acetobacteraceae</taxon>
        <taxon>Granulibacter</taxon>
    </lineage>
</organism>
<protein>
    <recommendedName>
        <fullName evidence="2">Elongation factor Tu</fullName>
        <shortName evidence="2">EF-Tu</shortName>
        <ecNumber evidence="2">3.6.5.3</ecNumber>
    </recommendedName>
</protein>
<accession>Q0BUQ2</accession>
<dbReference type="EC" id="3.6.5.3" evidence="2"/>
<dbReference type="EMBL" id="CP000394">
    <property type="protein sequence ID" value="ABI61450.1"/>
    <property type="molecule type" value="Genomic_DNA"/>
</dbReference>
<dbReference type="RefSeq" id="WP_011631260.1">
    <property type="nucleotide sequence ID" value="NC_008343.2"/>
</dbReference>
<dbReference type="SMR" id="Q0BUQ2"/>
<dbReference type="STRING" id="391165.GbCGDNIH1_0552"/>
<dbReference type="GeneID" id="69744805"/>
<dbReference type="KEGG" id="gbe:GbCGDNIH1_0552"/>
<dbReference type="eggNOG" id="COG0050">
    <property type="taxonomic scope" value="Bacteria"/>
</dbReference>
<dbReference type="HOGENOM" id="CLU_007265_0_0_5"/>
<dbReference type="OrthoDB" id="9803139at2"/>
<dbReference type="Proteomes" id="UP000001963">
    <property type="component" value="Chromosome"/>
</dbReference>
<dbReference type="GO" id="GO:0005829">
    <property type="term" value="C:cytosol"/>
    <property type="evidence" value="ECO:0007669"/>
    <property type="project" value="TreeGrafter"/>
</dbReference>
<dbReference type="GO" id="GO:0005525">
    <property type="term" value="F:GTP binding"/>
    <property type="evidence" value="ECO:0007669"/>
    <property type="project" value="UniProtKB-UniRule"/>
</dbReference>
<dbReference type="GO" id="GO:0003924">
    <property type="term" value="F:GTPase activity"/>
    <property type="evidence" value="ECO:0007669"/>
    <property type="project" value="InterPro"/>
</dbReference>
<dbReference type="GO" id="GO:0097216">
    <property type="term" value="F:guanosine tetraphosphate binding"/>
    <property type="evidence" value="ECO:0007669"/>
    <property type="project" value="UniProtKB-ARBA"/>
</dbReference>
<dbReference type="GO" id="GO:0003746">
    <property type="term" value="F:translation elongation factor activity"/>
    <property type="evidence" value="ECO:0007669"/>
    <property type="project" value="UniProtKB-UniRule"/>
</dbReference>
<dbReference type="CDD" id="cd01884">
    <property type="entry name" value="EF_Tu"/>
    <property type="match status" value="1"/>
</dbReference>
<dbReference type="CDD" id="cd03697">
    <property type="entry name" value="EFTU_II"/>
    <property type="match status" value="1"/>
</dbReference>
<dbReference type="CDD" id="cd03707">
    <property type="entry name" value="EFTU_III"/>
    <property type="match status" value="1"/>
</dbReference>
<dbReference type="FunFam" id="2.40.30.10:FF:000001">
    <property type="entry name" value="Elongation factor Tu"/>
    <property type="match status" value="1"/>
</dbReference>
<dbReference type="FunFam" id="3.40.50.300:FF:000003">
    <property type="entry name" value="Elongation factor Tu"/>
    <property type="match status" value="1"/>
</dbReference>
<dbReference type="Gene3D" id="3.40.50.300">
    <property type="entry name" value="P-loop containing nucleotide triphosphate hydrolases"/>
    <property type="match status" value="1"/>
</dbReference>
<dbReference type="Gene3D" id="2.40.30.10">
    <property type="entry name" value="Translation factors"/>
    <property type="match status" value="2"/>
</dbReference>
<dbReference type="HAMAP" id="MF_00118_B">
    <property type="entry name" value="EF_Tu_B"/>
    <property type="match status" value="1"/>
</dbReference>
<dbReference type="InterPro" id="IPR041709">
    <property type="entry name" value="EF-Tu_GTP-bd"/>
</dbReference>
<dbReference type="InterPro" id="IPR050055">
    <property type="entry name" value="EF-Tu_GTPase"/>
</dbReference>
<dbReference type="InterPro" id="IPR004161">
    <property type="entry name" value="EFTu-like_2"/>
</dbReference>
<dbReference type="InterPro" id="IPR033720">
    <property type="entry name" value="EFTU_2"/>
</dbReference>
<dbReference type="InterPro" id="IPR031157">
    <property type="entry name" value="G_TR_CS"/>
</dbReference>
<dbReference type="InterPro" id="IPR027417">
    <property type="entry name" value="P-loop_NTPase"/>
</dbReference>
<dbReference type="InterPro" id="IPR005225">
    <property type="entry name" value="Small_GTP-bd"/>
</dbReference>
<dbReference type="InterPro" id="IPR000795">
    <property type="entry name" value="T_Tr_GTP-bd_dom"/>
</dbReference>
<dbReference type="InterPro" id="IPR009000">
    <property type="entry name" value="Transl_B-barrel_sf"/>
</dbReference>
<dbReference type="InterPro" id="IPR009001">
    <property type="entry name" value="Transl_elong_EF1A/Init_IF2_C"/>
</dbReference>
<dbReference type="InterPro" id="IPR004541">
    <property type="entry name" value="Transl_elong_EFTu/EF1A_bac/org"/>
</dbReference>
<dbReference type="InterPro" id="IPR004160">
    <property type="entry name" value="Transl_elong_EFTu/EF1A_C"/>
</dbReference>
<dbReference type="NCBIfam" id="TIGR00485">
    <property type="entry name" value="EF-Tu"/>
    <property type="match status" value="1"/>
</dbReference>
<dbReference type="NCBIfam" id="NF000766">
    <property type="entry name" value="PRK00049.1"/>
    <property type="match status" value="1"/>
</dbReference>
<dbReference type="NCBIfam" id="NF009372">
    <property type="entry name" value="PRK12735.1"/>
    <property type="match status" value="1"/>
</dbReference>
<dbReference type="NCBIfam" id="NF009373">
    <property type="entry name" value="PRK12736.1"/>
    <property type="match status" value="1"/>
</dbReference>
<dbReference type="NCBIfam" id="TIGR00231">
    <property type="entry name" value="small_GTP"/>
    <property type="match status" value="1"/>
</dbReference>
<dbReference type="PANTHER" id="PTHR43721:SF22">
    <property type="entry name" value="ELONGATION FACTOR TU, MITOCHONDRIAL"/>
    <property type="match status" value="1"/>
</dbReference>
<dbReference type="PANTHER" id="PTHR43721">
    <property type="entry name" value="ELONGATION FACTOR TU-RELATED"/>
    <property type="match status" value="1"/>
</dbReference>
<dbReference type="Pfam" id="PF00009">
    <property type="entry name" value="GTP_EFTU"/>
    <property type="match status" value="1"/>
</dbReference>
<dbReference type="Pfam" id="PF03144">
    <property type="entry name" value="GTP_EFTU_D2"/>
    <property type="match status" value="1"/>
</dbReference>
<dbReference type="Pfam" id="PF03143">
    <property type="entry name" value="GTP_EFTU_D3"/>
    <property type="match status" value="1"/>
</dbReference>
<dbReference type="PRINTS" id="PR00315">
    <property type="entry name" value="ELONGATNFCT"/>
</dbReference>
<dbReference type="SUPFAM" id="SSF50465">
    <property type="entry name" value="EF-Tu/eEF-1alpha/eIF2-gamma C-terminal domain"/>
    <property type="match status" value="1"/>
</dbReference>
<dbReference type="SUPFAM" id="SSF52540">
    <property type="entry name" value="P-loop containing nucleoside triphosphate hydrolases"/>
    <property type="match status" value="1"/>
</dbReference>
<dbReference type="SUPFAM" id="SSF50447">
    <property type="entry name" value="Translation proteins"/>
    <property type="match status" value="1"/>
</dbReference>
<dbReference type="PROSITE" id="PS00301">
    <property type="entry name" value="G_TR_1"/>
    <property type="match status" value="1"/>
</dbReference>
<dbReference type="PROSITE" id="PS51722">
    <property type="entry name" value="G_TR_2"/>
    <property type="match status" value="1"/>
</dbReference>
<reference key="1">
    <citation type="journal article" date="2007" name="J. Bacteriol.">
        <title>Genome sequence analysis of the emerging human pathogenic acetic acid bacterium Granulibacter bethesdensis.</title>
        <authorList>
            <person name="Greenberg D.E."/>
            <person name="Porcella S.F."/>
            <person name="Zelazny A.M."/>
            <person name="Virtaneva K."/>
            <person name="Sturdevant D.E."/>
            <person name="Kupko J.J. III"/>
            <person name="Barbian K.D."/>
            <person name="Babar A."/>
            <person name="Dorward D.W."/>
            <person name="Holland S.M."/>
        </authorList>
    </citation>
    <scope>NUCLEOTIDE SEQUENCE [LARGE SCALE GENOMIC DNA]</scope>
    <source>
        <strain>ATCC BAA-1260 / CGDNIH1</strain>
    </source>
</reference>
<proteinExistence type="inferred from homology"/>
<sequence>MAKAKFERNKPHCNIGTIGHVDHGKTSLTAAITKVLAETGGATFTAYDQIDKAPEERARGITISTAHVEYETGNRHYAHVDCPGHADYVKNMITGAAQMDGGILVVSAADGPMPQTREHILLARQVGVPALVVFLNKVDMVDDPELLDLVEMEVRELLSSYQFPGDDIPIIKGSALCALEDKNPEIGRDAILKLMEAVDAYIPQPERPLDRPFLMPIEDVFSISGRGTVVTGRIERGEVKVGDEVEIVGLKATSKTTVTGVEMFRKLLDRGEAGDNIGALLRGTKREDVERGQVLAKPGSITPHTKFAAEAYILTKEEGGRHTPFFTNYRPQFYFRTTDVTGVVSLPEGTEMVMPGDNVSMQVELIAPIAMDEGLRFAIREGGRTVGAGVVAKISQ</sequence>
<gene>
    <name evidence="2" type="primary">tuf</name>
    <name type="ordered locus">GbCGDNIH1_0552</name>
</gene>
<keyword id="KW-0963">Cytoplasm</keyword>
<keyword id="KW-0251">Elongation factor</keyword>
<keyword id="KW-0342">GTP-binding</keyword>
<keyword id="KW-0378">Hydrolase</keyword>
<keyword id="KW-0460">Magnesium</keyword>
<keyword id="KW-0479">Metal-binding</keyword>
<keyword id="KW-0547">Nucleotide-binding</keyword>
<keyword id="KW-0648">Protein biosynthesis</keyword>
<keyword id="KW-1185">Reference proteome</keyword>
<evidence type="ECO:0000250" key="1"/>
<evidence type="ECO:0000255" key="2">
    <source>
        <dbReference type="HAMAP-Rule" id="MF_00118"/>
    </source>
</evidence>
<feature type="chain" id="PRO_1000015669" description="Elongation factor Tu">
    <location>
        <begin position="1"/>
        <end position="396"/>
    </location>
</feature>
<feature type="domain" description="tr-type G">
    <location>
        <begin position="10"/>
        <end position="206"/>
    </location>
</feature>
<feature type="region of interest" description="G1" evidence="1">
    <location>
        <begin position="19"/>
        <end position="26"/>
    </location>
</feature>
<feature type="region of interest" description="G2" evidence="1">
    <location>
        <begin position="60"/>
        <end position="64"/>
    </location>
</feature>
<feature type="region of interest" description="G3" evidence="1">
    <location>
        <begin position="81"/>
        <end position="84"/>
    </location>
</feature>
<feature type="region of interest" description="G4" evidence="1">
    <location>
        <begin position="136"/>
        <end position="139"/>
    </location>
</feature>
<feature type="region of interest" description="G5" evidence="1">
    <location>
        <begin position="174"/>
        <end position="176"/>
    </location>
</feature>
<feature type="binding site" evidence="2">
    <location>
        <begin position="19"/>
        <end position="26"/>
    </location>
    <ligand>
        <name>GTP</name>
        <dbReference type="ChEBI" id="CHEBI:37565"/>
    </ligand>
</feature>
<feature type="binding site" evidence="2">
    <location>
        <position position="26"/>
    </location>
    <ligand>
        <name>Mg(2+)</name>
        <dbReference type="ChEBI" id="CHEBI:18420"/>
    </ligand>
</feature>
<feature type="binding site" evidence="2">
    <location>
        <begin position="81"/>
        <end position="85"/>
    </location>
    <ligand>
        <name>GTP</name>
        <dbReference type="ChEBI" id="CHEBI:37565"/>
    </ligand>
</feature>
<feature type="binding site" evidence="2">
    <location>
        <begin position="136"/>
        <end position="139"/>
    </location>
    <ligand>
        <name>GTP</name>
        <dbReference type="ChEBI" id="CHEBI:37565"/>
    </ligand>
</feature>